<feature type="chain" id="PRO_0000388554" description="tRNA/tmRNA (uracil-C(5))-methyltransferase">
    <location>
        <begin position="1"/>
        <end position="367"/>
    </location>
</feature>
<feature type="active site" description="Nucleophile" evidence="1">
    <location>
        <position position="324"/>
    </location>
</feature>
<feature type="active site" description="Proton acceptor" evidence="1">
    <location>
        <position position="358"/>
    </location>
</feature>
<feature type="binding site" evidence="1">
    <location>
        <position position="190"/>
    </location>
    <ligand>
        <name>S-adenosyl-L-methionine</name>
        <dbReference type="ChEBI" id="CHEBI:59789"/>
    </ligand>
</feature>
<feature type="binding site" evidence="1">
    <location>
        <position position="218"/>
    </location>
    <ligand>
        <name>S-adenosyl-L-methionine</name>
        <dbReference type="ChEBI" id="CHEBI:59789"/>
    </ligand>
</feature>
<feature type="binding site" evidence="1">
    <location>
        <position position="223"/>
    </location>
    <ligand>
        <name>S-adenosyl-L-methionine</name>
        <dbReference type="ChEBI" id="CHEBI:59789"/>
    </ligand>
</feature>
<feature type="binding site" evidence="1">
    <location>
        <position position="239"/>
    </location>
    <ligand>
        <name>S-adenosyl-L-methionine</name>
        <dbReference type="ChEBI" id="CHEBI:59789"/>
    </ligand>
</feature>
<feature type="binding site" evidence="1">
    <location>
        <position position="299"/>
    </location>
    <ligand>
        <name>S-adenosyl-L-methionine</name>
        <dbReference type="ChEBI" id="CHEBI:59789"/>
    </ligand>
</feature>
<protein>
    <recommendedName>
        <fullName evidence="1">tRNA/tmRNA (uracil-C(5))-methyltransferase</fullName>
        <ecNumber evidence="1">2.1.1.-</ecNumber>
        <ecNumber evidence="1">2.1.1.35</ecNumber>
    </recommendedName>
    <alternativeName>
        <fullName evidence="1">tRNA (uracil(54)-C(5))-methyltransferase</fullName>
    </alternativeName>
    <alternativeName>
        <fullName evidence="1">tRNA(m5U54)-methyltransferase</fullName>
        <shortName evidence="1">RUMT</shortName>
    </alternativeName>
    <alternativeName>
        <fullName evidence="1">tmRNA (uracil(341)-C(5))-methyltransferase</fullName>
    </alternativeName>
</protein>
<dbReference type="EC" id="2.1.1.-" evidence="1"/>
<dbReference type="EC" id="2.1.1.35" evidence="1"/>
<dbReference type="EMBL" id="CP001655">
    <property type="protein sequence ID" value="ACT05024.1"/>
    <property type="molecule type" value="Genomic_DNA"/>
</dbReference>
<dbReference type="RefSeq" id="WP_012767914.1">
    <property type="nucleotide sequence ID" value="NC_012912.1"/>
</dbReference>
<dbReference type="SMR" id="C6CG41"/>
<dbReference type="STRING" id="561229.Dd1591_0131"/>
<dbReference type="GeneID" id="45078257"/>
<dbReference type="KEGG" id="dze:Dd1591_0131"/>
<dbReference type="eggNOG" id="COG2265">
    <property type="taxonomic scope" value="Bacteria"/>
</dbReference>
<dbReference type="HOGENOM" id="CLU_043022_0_0_6"/>
<dbReference type="OrthoDB" id="9804590at2"/>
<dbReference type="Proteomes" id="UP000002735">
    <property type="component" value="Chromosome"/>
</dbReference>
<dbReference type="GO" id="GO:0005829">
    <property type="term" value="C:cytosol"/>
    <property type="evidence" value="ECO:0007669"/>
    <property type="project" value="TreeGrafter"/>
</dbReference>
<dbReference type="GO" id="GO:0019843">
    <property type="term" value="F:rRNA binding"/>
    <property type="evidence" value="ECO:0007669"/>
    <property type="project" value="TreeGrafter"/>
</dbReference>
<dbReference type="GO" id="GO:0030697">
    <property type="term" value="F:tRNA (uracil(54)-C5)-methyltransferase activity, S-adenosyl methionine-dependent"/>
    <property type="evidence" value="ECO:0007669"/>
    <property type="project" value="UniProtKB-UniRule"/>
</dbReference>
<dbReference type="GO" id="GO:0000049">
    <property type="term" value="F:tRNA binding"/>
    <property type="evidence" value="ECO:0007669"/>
    <property type="project" value="TreeGrafter"/>
</dbReference>
<dbReference type="GO" id="GO:0030488">
    <property type="term" value="P:tRNA methylation"/>
    <property type="evidence" value="ECO:0007669"/>
    <property type="project" value="UniProtKB-UniRule"/>
</dbReference>
<dbReference type="CDD" id="cd02440">
    <property type="entry name" value="AdoMet_MTases"/>
    <property type="match status" value="1"/>
</dbReference>
<dbReference type="FunFam" id="2.40.50.1070:FF:000001">
    <property type="entry name" value="tRNA/tmRNA (uracil-C(5))-methyltransferase"/>
    <property type="match status" value="1"/>
</dbReference>
<dbReference type="FunFam" id="3.40.50.150:FF:000012">
    <property type="entry name" value="tRNA/tmRNA (uracil-C(5))-methyltransferase"/>
    <property type="match status" value="1"/>
</dbReference>
<dbReference type="Gene3D" id="2.40.50.1070">
    <property type="match status" value="1"/>
</dbReference>
<dbReference type="Gene3D" id="3.40.50.150">
    <property type="entry name" value="Vaccinia Virus protein VP39"/>
    <property type="match status" value="1"/>
</dbReference>
<dbReference type="HAMAP" id="MF_01011">
    <property type="entry name" value="RNA_methyltr_TrmA"/>
    <property type="match status" value="1"/>
</dbReference>
<dbReference type="InterPro" id="IPR030390">
    <property type="entry name" value="MeTrfase_TrmA_AS"/>
</dbReference>
<dbReference type="InterPro" id="IPR030391">
    <property type="entry name" value="MeTrfase_TrmA_CS"/>
</dbReference>
<dbReference type="InterPro" id="IPR029063">
    <property type="entry name" value="SAM-dependent_MTases_sf"/>
</dbReference>
<dbReference type="InterPro" id="IPR011869">
    <property type="entry name" value="TrmA_MeTrfase"/>
</dbReference>
<dbReference type="InterPro" id="IPR010280">
    <property type="entry name" value="U5_MeTrfase_fam"/>
</dbReference>
<dbReference type="NCBIfam" id="TIGR02143">
    <property type="entry name" value="trmA_only"/>
    <property type="match status" value="1"/>
</dbReference>
<dbReference type="PANTHER" id="PTHR47790">
    <property type="entry name" value="TRNA/TMRNA (URACIL-C(5))-METHYLTRANSFERASE"/>
    <property type="match status" value="1"/>
</dbReference>
<dbReference type="PANTHER" id="PTHR47790:SF2">
    <property type="entry name" value="TRNA_TMRNA (URACIL-C(5))-METHYLTRANSFERASE"/>
    <property type="match status" value="1"/>
</dbReference>
<dbReference type="Pfam" id="PF05958">
    <property type="entry name" value="tRNA_U5-meth_tr"/>
    <property type="match status" value="1"/>
</dbReference>
<dbReference type="SUPFAM" id="SSF53335">
    <property type="entry name" value="S-adenosyl-L-methionine-dependent methyltransferases"/>
    <property type="match status" value="1"/>
</dbReference>
<dbReference type="PROSITE" id="PS51687">
    <property type="entry name" value="SAM_MT_RNA_M5U"/>
    <property type="match status" value="1"/>
</dbReference>
<dbReference type="PROSITE" id="PS01230">
    <property type="entry name" value="TRMA_1"/>
    <property type="match status" value="1"/>
</dbReference>
<dbReference type="PROSITE" id="PS01231">
    <property type="entry name" value="TRMA_2"/>
    <property type="match status" value="1"/>
</dbReference>
<evidence type="ECO:0000255" key="1">
    <source>
        <dbReference type="HAMAP-Rule" id="MF_01011"/>
    </source>
</evidence>
<keyword id="KW-0489">Methyltransferase</keyword>
<keyword id="KW-0949">S-adenosyl-L-methionine</keyword>
<keyword id="KW-0808">Transferase</keyword>
<keyword id="KW-0819">tRNA processing</keyword>
<accession>C6CG41</accession>
<gene>
    <name evidence="1" type="primary">trmA</name>
    <name type="ordered locus">Dd1591_0131</name>
</gene>
<proteinExistence type="inferred from homology"/>
<organism>
    <name type="scientific">Dickeya chrysanthemi (strain Ech1591)</name>
    <name type="common">Dickeya zeae (strain Ech1591)</name>
    <dbReference type="NCBI Taxonomy" id="561229"/>
    <lineage>
        <taxon>Bacteria</taxon>
        <taxon>Pseudomonadati</taxon>
        <taxon>Pseudomonadota</taxon>
        <taxon>Gammaproteobacteria</taxon>
        <taxon>Enterobacterales</taxon>
        <taxon>Pectobacteriaceae</taxon>
        <taxon>Dickeya</taxon>
    </lineage>
</organism>
<reference key="1">
    <citation type="submission" date="2009-06" db="EMBL/GenBank/DDBJ databases">
        <title>Complete sequence of Dickeya zeae Ech1591.</title>
        <authorList>
            <consortium name="US DOE Joint Genome Institute"/>
            <person name="Lucas S."/>
            <person name="Copeland A."/>
            <person name="Lapidus A."/>
            <person name="Glavina del Rio T."/>
            <person name="Tice H."/>
            <person name="Bruce D."/>
            <person name="Goodwin L."/>
            <person name="Pitluck S."/>
            <person name="Chertkov O."/>
            <person name="Brettin T."/>
            <person name="Detter J.C."/>
            <person name="Han C."/>
            <person name="Larimer F."/>
            <person name="Land M."/>
            <person name="Hauser L."/>
            <person name="Kyrpides N."/>
            <person name="Ovchinnikova G."/>
            <person name="Balakrishnan V."/>
            <person name="Glasner J."/>
            <person name="Perna N.T."/>
        </authorList>
    </citation>
    <scope>NUCLEOTIDE SEQUENCE [LARGE SCALE GENOMIC DNA]</scope>
    <source>
        <strain>Ech1591</strain>
    </source>
</reference>
<name>TRMA_DICC1</name>
<comment type="function">
    <text evidence="1">Dual-specificity methyltransferase that catalyzes the formation of 5-methyluridine at position 54 (m5U54) in all tRNAs, and that of position 341 (m5U341) in tmRNA (transfer-mRNA).</text>
</comment>
<comment type="catalytic activity">
    <reaction evidence="1">
        <text>uridine(54) in tRNA + S-adenosyl-L-methionine = 5-methyluridine(54) in tRNA + S-adenosyl-L-homocysteine + H(+)</text>
        <dbReference type="Rhea" id="RHEA:42712"/>
        <dbReference type="Rhea" id="RHEA-COMP:10167"/>
        <dbReference type="Rhea" id="RHEA-COMP:10193"/>
        <dbReference type="ChEBI" id="CHEBI:15378"/>
        <dbReference type="ChEBI" id="CHEBI:57856"/>
        <dbReference type="ChEBI" id="CHEBI:59789"/>
        <dbReference type="ChEBI" id="CHEBI:65315"/>
        <dbReference type="ChEBI" id="CHEBI:74447"/>
        <dbReference type="EC" id="2.1.1.35"/>
    </reaction>
</comment>
<comment type="catalytic activity">
    <reaction evidence="1">
        <text>uridine(341) in tmRNA + S-adenosyl-L-methionine = 5-methyluridine(341) in tmRNA + S-adenosyl-L-homocysteine + H(+)</text>
        <dbReference type="Rhea" id="RHEA:43612"/>
        <dbReference type="Rhea" id="RHEA-COMP:10630"/>
        <dbReference type="Rhea" id="RHEA-COMP:10631"/>
        <dbReference type="ChEBI" id="CHEBI:15378"/>
        <dbReference type="ChEBI" id="CHEBI:57856"/>
        <dbReference type="ChEBI" id="CHEBI:59789"/>
        <dbReference type="ChEBI" id="CHEBI:65315"/>
        <dbReference type="ChEBI" id="CHEBI:74447"/>
    </reaction>
</comment>
<comment type="similarity">
    <text evidence="1">Belongs to the class I-like SAM-binding methyltransferase superfamily. RNA M5U methyltransferase family. TrmA subfamily.</text>
</comment>
<sequence>MTPEILPIDQYDAQLEEKTGRLGAMMAPFDAPAPAVFRSPVSHYRMRAEFRIWHDGDDLYHIMFDQQTKQRIRVDQFPAASELINRLMPVLLNALRAEPVLRRKLFQLDYLSTLSGEIAVSLLYHKALDDEWRQRARELCDELRAQGFALQLIGRATKTKICLDRDYVDECLPVAGRQMIYRQVENSFTQPNAMMNIQMLEWALSVTQGSTGDLLELYCGNGNFSLALARNFERVLATEIAKPSVAAAQYNIAANQIDNVQIIRMAAEEFTQAMNGVRQFNRLQGIDLAGYRCETIFVDPPRSGLDDGTAKLVQAYPRILYISCNPETLCANLETLSQTHRISQLALFDQFPYTHHMECGVLLEKRQ</sequence>